<reference evidence="7" key="1">
    <citation type="journal article" date="2014" name="Parasit. Vectors">
        <title>The sialotranscriptome of Amblyomma triste, Amblyomma parvum and Amblyomma cajennense ticks, uncovered by 454-based RNA-seq.</title>
        <authorList>
            <person name="Garcia G.R."/>
            <person name="Gardinassi L.G."/>
            <person name="Ribeiro J.M."/>
            <person name="Anatriello E."/>
            <person name="Ferreira B.R."/>
            <person name="Moreira H.N."/>
            <person name="Mafra C."/>
            <person name="Martins M.M."/>
            <person name="Szabo M.P."/>
            <person name="de Miranda-Santos I.K."/>
            <person name="Maruyama S.R."/>
        </authorList>
    </citation>
    <scope>NUCLEOTIDE SEQUENCE [LARGE SCALE MRNA]</scope>
    <source>
        <strain evidence="7">Uberlandia</strain>
        <tissue evidence="7">Salivary gland</tissue>
    </source>
</reference>
<reference evidence="6" key="2">
    <citation type="journal article" date="2019" name="J. Biol. Chem.">
        <title>A knottin scaffold directs the CXC-chemokine-binding specificity of tick evasins.</title>
        <authorList>
            <person name="Lee A.W."/>
            <person name="Deruaz M."/>
            <person name="Lynch C."/>
            <person name="Davies G."/>
            <person name="Singh K."/>
            <person name="Alenazi Y."/>
            <person name="Eaton J.R.O."/>
            <person name="Kawamura A."/>
            <person name="Shaw J."/>
            <person name="Proudfoot A.E.I."/>
            <person name="Dias J.M."/>
            <person name="Bhattacharya S."/>
        </authorList>
    </citation>
    <scope>FUNCTION</scope>
</reference>
<name>E1126_AMBCJ</name>
<proteinExistence type="inferred from homology"/>
<feature type="signal peptide" evidence="2">
    <location>
        <begin position="1"/>
        <end position="25"/>
    </location>
</feature>
<feature type="chain" id="PRO_5001515397" description="Evasin P1126" evidence="2">
    <location>
        <begin position="26"/>
        <end position="90"/>
    </location>
</feature>
<feature type="glycosylation site" description="N-linked (GlcNAc...) asparagine" evidence="3">
    <location>
        <position position="55"/>
    </location>
</feature>
<feature type="glycosylation site" description="N-linked (GlcNAc...) asparagine" evidence="3">
    <location>
        <position position="77"/>
    </location>
</feature>
<feature type="disulfide bond" evidence="1">
    <location>
        <begin position="46"/>
        <end position="62"/>
    </location>
</feature>
<feature type="disulfide bond" evidence="1">
    <location>
        <begin position="50"/>
        <end position="64"/>
    </location>
</feature>
<feature type="disulfide bond" evidence="1">
    <location>
        <begin position="58"/>
        <end position="75"/>
    </location>
</feature>
<accession>A0A023FF81</accession>
<sequence>MTSHSAVRIAIFAVIALHSIFECLSKPQILQRTDKSTDSEWDPQTCPETCIPSKNITCSDGCVCVKLGEEEEGTCFNMTGVDWLGSPSDD</sequence>
<dbReference type="EMBL" id="GBBK01004893">
    <property type="protein sequence ID" value="JAC19589.1"/>
    <property type="molecule type" value="mRNA"/>
</dbReference>
<dbReference type="SMR" id="A0A023FF81"/>
<dbReference type="GO" id="GO:0005576">
    <property type="term" value="C:extracellular region"/>
    <property type="evidence" value="ECO:0007669"/>
    <property type="project" value="UniProtKB-SubCell"/>
</dbReference>
<dbReference type="GO" id="GO:0019958">
    <property type="term" value="F:C-X-C chemokine binding"/>
    <property type="evidence" value="ECO:0000314"/>
    <property type="project" value="UniProtKB"/>
</dbReference>
<evidence type="ECO:0000250" key="1">
    <source>
        <dbReference type="UniProtKB" id="P0C8E8"/>
    </source>
</evidence>
<evidence type="ECO:0000255" key="2"/>
<evidence type="ECO:0000255" key="3">
    <source>
        <dbReference type="PROSITE-ProRule" id="PRU00498"/>
    </source>
</evidence>
<evidence type="ECO:0000269" key="4">
    <source>
    </source>
</evidence>
<evidence type="ECO:0000303" key="5">
    <source>
    </source>
</evidence>
<evidence type="ECO:0000305" key="6"/>
<evidence type="ECO:0000312" key="7">
    <source>
        <dbReference type="EMBL" id="JAC19589.1"/>
    </source>
</evidence>
<organism>
    <name type="scientific">Amblyomma cajennense</name>
    <name type="common">Cayenne tick</name>
    <name type="synonym">Acarus cajennensis</name>
    <dbReference type="NCBI Taxonomy" id="34607"/>
    <lineage>
        <taxon>Eukaryota</taxon>
        <taxon>Metazoa</taxon>
        <taxon>Ecdysozoa</taxon>
        <taxon>Arthropoda</taxon>
        <taxon>Chelicerata</taxon>
        <taxon>Arachnida</taxon>
        <taxon>Acari</taxon>
        <taxon>Parasitiformes</taxon>
        <taxon>Ixodida</taxon>
        <taxon>Ixodoidea</taxon>
        <taxon>Ixodidae</taxon>
        <taxon>Amblyomminae</taxon>
        <taxon>Amblyomma</taxon>
    </lineage>
</organism>
<comment type="function">
    <text evidence="4">Salivary chemokine-binding protein which binds to host chemokines CXCL1, CXCL2, CXCL3, CXCL4, CXCL5, CXCL6, CXCL7, CXCL10 and CXCL11.</text>
</comment>
<comment type="subcellular location">
    <subcellularLocation>
        <location evidence="6">Secreted</location>
    </subcellularLocation>
</comment>
<protein>
    <recommendedName>
        <fullName evidence="5">Evasin P1126</fullName>
    </recommendedName>
</protein>
<keyword id="KW-1015">Disulfide bond</keyword>
<keyword id="KW-0325">Glycoprotein</keyword>
<keyword id="KW-0964">Secreted</keyword>
<keyword id="KW-0732">Signal</keyword>